<reference key="1">
    <citation type="submission" date="2008-10" db="EMBL/GenBank/DDBJ databases">
        <title>Genome sequence of Bacillus cereus AH820.</title>
        <authorList>
            <person name="Dodson R.J."/>
            <person name="Durkin A.S."/>
            <person name="Rosovitz M.J."/>
            <person name="Rasko D.A."/>
            <person name="Hoffmaster A."/>
            <person name="Ravel J."/>
            <person name="Sutton G."/>
        </authorList>
    </citation>
    <scope>NUCLEOTIDE SEQUENCE [LARGE SCALE GENOMIC DNA]</scope>
    <source>
        <strain>AH820</strain>
    </source>
</reference>
<dbReference type="EC" id="5.4.3.8" evidence="1"/>
<dbReference type="EMBL" id="CP001283">
    <property type="protein sequence ID" value="ACK92264.1"/>
    <property type="molecule type" value="Genomic_DNA"/>
</dbReference>
<dbReference type="SMR" id="B7JQ54"/>
<dbReference type="KEGG" id="bcu:BCAH820_4548"/>
<dbReference type="HOGENOM" id="CLU_016922_1_5_9"/>
<dbReference type="UniPathway" id="UPA00251">
    <property type="reaction ID" value="UER00317"/>
</dbReference>
<dbReference type="Proteomes" id="UP000001363">
    <property type="component" value="Chromosome"/>
</dbReference>
<dbReference type="GO" id="GO:0005737">
    <property type="term" value="C:cytoplasm"/>
    <property type="evidence" value="ECO:0007669"/>
    <property type="project" value="UniProtKB-SubCell"/>
</dbReference>
<dbReference type="GO" id="GO:0042286">
    <property type="term" value="F:glutamate-1-semialdehyde 2,1-aminomutase activity"/>
    <property type="evidence" value="ECO:0007669"/>
    <property type="project" value="UniProtKB-UniRule"/>
</dbReference>
<dbReference type="GO" id="GO:0030170">
    <property type="term" value="F:pyridoxal phosphate binding"/>
    <property type="evidence" value="ECO:0007669"/>
    <property type="project" value="InterPro"/>
</dbReference>
<dbReference type="GO" id="GO:0008483">
    <property type="term" value="F:transaminase activity"/>
    <property type="evidence" value="ECO:0007669"/>
    <property type="project" value="InterPro"/>
</dbReference>
<dbReference type="GO" id="GO:0006782">
    <property type="term" value="P:protoporphyrinogen IX biosynthetic process"/>
    <property type="evidence" value="ECO:0007669"/>
    <property type="project" value="UniProtKB-UniRule"/>
</dbReference>
<dbReference type="CDD" id="cd00610">
    <property type="entry name" value="OAT_like"/>
    <property type="match status" value="1"/>
</dbReference>
<dbReference type="FunFam" id="3.40.640.10:FF:000021">
    <property type="entry name" value="Glutamate-1-semialdehyde 2,1-aminomutase"/>
    <property type="match status" value="1"/>
</dbReference>
<dbReference type="Gene3D" id="3.90.1150.10">
    <property type="entry name" value="Aspartate Aminotransferase, domain 1"/>
    <property type="match status" value="1"/>
</dbReference>
<dbReference type="Gene3D" id="3.40.640.10">
    <property type="entry name" value="Type I PLP-dependent aspartate aminotransferase-like (Major domain)"/>
    <property type="match status" value="1"/>
</dbReference>
<dbReference type="HAMAP" id="MF_00375">
    <property type="entry name" value="HemL_aminotrans_3"/>
    <property type="match status" value="1"/>
</dbReference>
<dbReference type="InterPro" id="IPR004639">
    <property type="entry name" value="4pyrrol_synth_GluAld_NH2Trfase"/>
</dbReference>
<dbReference type="InterPro" id="IPR005814">
    <property type="entry name" value="Aminotrans_3"/>
</dbReference>
<dbReference type="InterPro" id="IPR049704">
    <property type="entry name" value="Aminotrans_3_PPA_site"/>
</dbReference>
<dbReference type="InterPro" id="IPR015424">
    <property type="entry name" value="PyrdxlP-dep_Trfase"/>
</dbReference>
<dbReference type="InterPro" id="IPR015421">
    <property type="entry name" value="PyrdxlP-dep_Trfase_major"/>
</dbReference>
<dbReference type="InterPro" id="IPR015422">
    <property type="entry name" value="PyrdxlP-dep_Trfase_small"/>
</dbReference>
<dbReference type="NCBIfam" id="TIGR00713">
    <property type="entry name" value="hemL"/>
    <property type="match status" value="1"/>
</dbReference>
<dbReference type="NCBIfam" id="NF000818">
    <property type="entry name" value="PRK00062.1"/>
    <property type="match status" value="1"/>
</dbReference>
<dbReference type="PANTHER" id="PTHR43713">
    <property type="entry name" value="GLUTAMATE-1-SEMIALDEHYDE 2,1-AMINOMUTASE"/>
    <property type="match status" value="1"/>
</dbReference>
<dbReference type="PANTHER" id="PTHR43713:SF3">
    <property type="entry name" value="GLUTAMATE-1-SEMIALDEHYDE 2,1-AMINOMUTASE 1, CHLOROPLASTIC-RELATED"/>
    <property type="match status" value="1"/>
</dbReference>
<dbReference type="Pfam" id="PF00202">
    <property type="entry name" value="Aminotran_3"/>
    <property type="match status" value="1"/>
</dbReference>
<dbReference type="SUPFAM" id="SSF53383">
    <property type="entry name" value="PLP-dependent transferases"/>
    <property type="match status" value="1"/>
</dbReference>
<dbReference type="PROSITE" id="PS00600">
    <property type="entry name" value="AA_TRANSFER_CLASS_3"/>
    <property type="match status" value="1"/>
</dbReference>
<sequence>MRKFDKSIAAFEEAQDLMPGGVNSPVRAFKSVGMNPLFMERGKGSKVYDIDGNEYIDYVLSWGPLIHGHANDRVVEALKAVAERGTSFGAPTEIENKLAKLVIERVPSIEIVRMVNSGTEATMSALRLARGYTGRNKILKFIGCYHGHGDSLLIKAGSGVATLGLPDSPGVPEGVAKNTITVAYNDLESVKYAFEQFGDDIACVIVEPVAGNMGVVPPQPGFLEGLREVTEQNGALLIFDEVMTGFRVAYNCGQGYYGVTPDLTCLGKVIGGGLPVGAYGGKAEIMRQVAPSGPIYQAGTLSGNPLAMAAGYETLVQLTPESYVEFERKAEMLEAGLRKAAEKHGIPHHINRAGSMIGIFFTDEPVINYDAAKSSNLQFFAAYYREMVEQGVFLPPSQFEGLFLSTAHSDADIEATIAAAEIAMSKLKA</sequence>
<evidence type="ECO:0000255" key="1">
    <source>
        <dbReference type="HAMAP-Rule" id="MF_00375"/>
    </source>
</evidence>
<keyword id="KW-0963">Cytoplasm</keyword>
<keyword id="KW-0413">Isomerase</keyword>
<keyword id="KW-0627">Porphyrin biosynthesis</keyword>
<keyword id="KW-0663">Pyridoxal phosphate</keyword>
<comment type="catalytic activity">
    <reaction evidence="1">
        <text>(S)-4-amino-5-oxopentanoate = 5-aminolevulinate</text>
        <dbReference type="Rhea" id="RHEA:14265"/>
        <dbReference type="ChEBI" id="CHEBI:57501"/>
        <dbReference type="ChEBI" id="CHEBI:356416"/>
        <dbReference type="EC" id="5.4.3.8"/>
    </reaction>
</comment>
<comment type="cofactor">
    <cofactor evidence="1">
        <name>pyridoxal 5'-phosphate</name>
        <dbReference type="ChEBI" id="CHEBI:597326"/>
    </cofactor>
</comment>
<comment type="pathway">
    <text evidence="1">Porphyrin-containing compound metabolism; protoporphyrin-IX biosynthesis; 5-aminolevulinate from L-glutamyl-tRNA(Glu): step 2/2.</text>
</comment>
<comment type="subunit">
    <text evidence="1">Homodimer.</text>
</comment>
<comment type="subcellular location">
    <subcellularLocation>
        <location evidence="1">Cytoplasm</location>
    </subcellularLocation>
</comment>
<comment type="similarity">
    <text evidence="1">Belongs to the class-III pyridoxal-phosphate-dependent aminotransferase family. HemL subfamily.</text>
</comment>
<proteinExistence type="inferred from homology"/>
<name>GSA2_BACC0</name>
<feature type="chain" id="PRO_0000382268" description="Glutamate-1-semialdehyde 2,1-aminomutase 2">
    <location>
        <begin position="1"/>
        <end position="429"/>
    </location>
</feature>
<feature type="modified residue" description="N6-(pyridoxal phosphate)lysine" evidence="1">
    <location>
        <position position="268"/>
    </location>
</feature>
<gene>
    <name evidence="1" type="primary">hemL2</name>
    <name type="ordered locus">BCAH820_4548</name>
</gene>
<protein>
    <recommendedName>
        <fullName evidence="1">Glutamate-1-semialdehyde 2,1-aminomutase 2</fullName>
        <shortName evidence="1">GSA 2</shortName>
        <ecNumber evidence="1">5.4.3.8</ecNumber>
    </recommendedName>
    <alternativeName>
        <fullName evidence="1">Glutamate-1-semialdehyde aminotransferase 2</fullName>
        <shortName evidence="1">GSA-AT 2</shortName>
    </alternativeName>
</protein>
<organism>
    <name type="scientific">Bacillus cereus (strain AH820)</name>
    <dbReference type="NCBI Taxonomy" id="405535"/>
    <lineage>
        <taxon>Bacteria</taxon>
        <taxon>Bacillati</taxon>
        <taxon>Bacillota</taxon>
        <taxon>Bacilli</taxon>
        <taxon>Bacillales</taxon>
        <taxon>Bacillaceae</taxon>
        <taxon>Bacillus</taxon>
        <taxon>Bacillus cereus group</taxon>
    </lineage>
</organism>
<accession>B7JQ54</accession>